<name>RIMM_STRR6</name>
<reference key="1">
    <citation type="journal article" date="2001" name="J. Bacteriol.">
        <title>Genome of the bacterium Streptococcus pneumoniae strain R6.</title>
        <authorList>
            <person name="Hoskins J."/>
            <person name="Alborn W.E. Jr."/>
            <person name="Arnold J."/>
            <person name="Blaszczak L.C."/>
            <person name="Burgett S."/>
            <person name="DeHoff B.S."/>
            <person name="Estrem S.T."/>
            <person name="Fritz L."/>
            <person name="Fu D.-J."/>
            <person name="Fuller W."/>
            <person name="Geringer C."/>
            <person name="Gilmour R."/>
            <person name="Glass J.S."/>
            <person name="Khoja H."/>
            <person name="Kraft A.R."/>
            <person name="Lagace R.E."/>
            <person name="LeBlanc D.J."/>
            <person name="Lee L.N."/>
            <person name="Lefkowitz E.J."/>
            <person name="Lu J."/>
            <person name="Matsushima P."/>
            <person name="McAhren S.M."/>
            <person name="McHenney M."/>
            <person name="McLeaster K."/>
            <person name="Mundy C.W."/>
            <person name="Nicas T.I."/>
            <person name="Norris F.H."/>
            <person name="O'Gara M."/>
            <person name="Peery R.B."/>
            <person name="Robertson G.T."/>
            <person name="Rockey P."/>
            <person name="Sun P.-M."/>
            <person name="Winkler M.E."/>
            <person name="Yang Y."/>
            <person name="Young-Bellido M."/>
            <person name="Zhao G."/>
            <person name="Zook C.A."/>
            <person name="Baltz R.H."/>
            <person name="Jaskunas S.R."/>
            <person name="Rosteck P.R. Jr."/>
            <person name="Skatrud P.L."/>
            <person name="Glass J.I."/>
        </authorList>
    </citation>
    <scope>NUCLEOTIDE SEQUENCE [LARGE SCALE GENOMIC DNA]</scope>
    <source>
        <strain>ATCC BAA-255 / R6</strain>
    </source>
</reference>
<evidence type="ECO:0000255" key="1">
    <source>
        <dbReference type="HAMAP-Rule" id="MF_00014"/>
    </source>
</evidence>
<proteinExistence type="inferred from homology"/>
<gene>
    <name evidence="1" type="primary">rimM</name>
    <name type="ordered locus">spr0686</name>
</gene>
<feature type="chain" id="PRO_0000163366" description="Ribosome maturation factor RimM">
    <location>
        <begin position="1"/>
        <end position="172"/>
    </location>
</feature>
<feature type="domain" description="PRC barrel" evidence="1">
    <location>
        <begin position="96"/>
        <end position="168"/>
    </location>
</feature>
<comment type="function">
    <text evidence="1">An accessory protein needed during the final step in the assembly of 30S ribosomal subunit, possibly for assembly of the head region. Essential for efficient processing of 16S rRNA. May be needed both before and after RbfA during the maturation of 16S rRNA. It has affinity for free ribosomal 30S subunits but not for 70S ribosomes.</text>
</comment>
<comment type="subunit">
    <text evidence="1">Binds ribosomal protein uS19.</text>
</comment>
<comment type="subcellular location">
    <subcellularLocation>
        <location evidence="1">Cytoplasm</location>
    </subcellularLocation>
</comment>
<comment type="domain">
    <text evidence="1">The PRC barrel domain binds ribosomal protein uS19.</text>
</comment>
<comment type="similarity">
    <text evidence="1">Belongs to the RimM family.</text>
</comment>
<dbReference type="EMBL" id="AE007317">
    <property type="protein sequence ID" value="AAK99490.1"/>
    <property type="molecule type" value="Genomic_DNA"/>
</dbReference>
<dbReference type="PIR" id="F97957">
    <property type="entry name" value="F97957"/>
</dbReference>
<dbReference type="RefSeq" id="NP_358280.1">
    <property type="nucleotide sequence ID" value="NC_003098.1"/>
</dbReference>
<dbReference type="RefSeq" id="WP_001105899.1">
    <property type="nucleotide sequence ID" value="NC_003098.1"/>
</dbReference>
<dbReference type="SMR" id="Q8DQG3"/>
<dbReference type="STRING" id="171101.spr0686"/>
<dbReference type="GeneID" id="45653851"/>
<dbReference type="KEGG" id="spr:spr0686"/>
<dbReference type="PATRIC" id="fig|171101.6.peg.759"/>
<dbReference type="eggNOG" id="COG0806">
    <property type="taxonomic scope" value="Bacteria"/>
</dbReference>
<dbReference type="HOGENOM" id="CLU_077636_3_1_9"/>
<dbReference type="Proteomes" id="UP000000586">
    <property type="component" value="Chromosome"/>
</dbReference>
<dbReference type="GO" id="GO:0005829">
    <property type="term" value="C:cytosol"/>
    <property type="evidence" value="ECO:0000318"/>
    <property type="project" value="GO_Central"/>
</dbReference>
<dbReference type="GO" id="GO:0005840">
    <property type="term" value="C:ribosome"/>
    <property type="evidence" value="ECO:0007669"/>
    <property type="project" value="InterPro"/>
</dbReference>
<dbReference type="GO" id="GO:0043022">
    <property type="term" value="F:ribosome binding"/>
    <property type="evidence" value="ECO:0007669"/>
    <property type="project" value="InterPro"/>
</dbReference>
<dbReference type="GO" id="GO:0030490">
    <property type="term" value="P:maturation of SSU-rRNA"/>
    <property type="evidence" value="ECO:0000318"/>
    <property type="project" value="GO_Central"/>
</dbReference>
<dbReference type="Gene3D" id="2.30.30.240">
    <property type="entry name" value="PRC-barrel domain"/>
    <property type="match status" value="1"/>
</dbReference>
<dbReference type="Gene3D" id="2.40.30.60">
    <property type="entry name" value="RimM"/>
    <property type="match status" value="1"/>
</dbReference>
<dbReference type="HAMAP" id="MF_00014">
    <property type="entry name" value="Ribosome_mat_RimM"/>
    <property type="match status" value="1"/>
</dbReference>
<dbReference type="InterPro" id="IPR027275">
    <property type="entry name" value="PRC-brl_dom"/>
</dbReference>
<dbReference type="InterPro" id="IPR011033">
    <property type="entry name" value="PRC_barrel-like_sf"/>
</dbReference>
<dbReference type="InterPro" id="IPR011961">
    <property type="entry name" value="RimM"/>
</dbReference>
<dbReference type="InterPro" id="IPR002676">
    <property type="entry name" value="RimM_N"/>
</dbReference>
<dbReference type="InterPro" id="IPR036976">
    <property type="entry name" value="RimM_N_sf"/>
</dbReference>
<dbReference type="InterPro" id="IPR009000">
    <property type="entry name" value="Transl_B-barrel_sf"/>
</dbReference>
<dbReference type="NCBIfam" id="TIGR02273">
    <property type="entry name" value="16S_RimM"/>
    <property type="match status" value="1"/>
</dbReference>
<dbReference type="PANTHER" id="PTHR33692">
    <property type="entry name" value="RIBOSOME MATURATION FACTOR RIMM"/>
    <property type="match status" value="1"/>
</dbReference>
<dbReference type="PANTHER" id="PTHR33692:SF1">
    <property type="entry name" value="RIBOSOME MATURATION FACTOR RIMM"/>
    <property type="match status" value="1"/>
</dbReference>
<dbReference type="Pfam" id="PF05239">
    <property type="entry name" value="PRC"/>
    <property type="match status" value="1"/>
</dbReference>
<dbReference type="Pfam" id="PF01782">
    <property type="entry name" value="RimM"/>
    <property type="match status" value="1"/>
</dbReference>
<dbReference type="SUPFAM" id="SSF50346">
    <property type="entry name" value="PRC-barrel domain"/>
    <property type="match status" value="1"/>
</dbReference>
<dbReference type="SUPFAM" id="SSF50447">
    <property type="entry name" value="Translation proteins"/>
    <property type="match status" value="1"/>
</dbReference>
<keyword id="KW-0143">Chaperone</keyword>
<keyword id="KW-0963">Cytoplasm</keyword>
<keyword id="KW-1185">Reference proteome</keyword>
<keyword id="KW-0690">Ribosome biogenesis</keyword>
<keyword id="KW-0698">rRNA processing</keyword>
<sequence>MNYFNVGKIVNTQGLQGEMRVLSVTDFAEERFKKGAELALFDEKDQFVQTVTIASHRKQKNFDIIKFKDMYHINTIEKYKGYSLKVAEEDLNDLDDGEFYYHEIIGLEVYEGDSLVGTIKEILQPGANDVWVVKRKGKRDLLLPYIPPVVLNVDIPNKRVDVEILEGLDDED</sequence>
<organism>
    <name type="scientific">Streptococcus pneumoniae (strain ATCC BAA-255 / R6)</name>
    <dbReference type="NCBI Taxonomy" id="171101"/>
    <lineage>
        <taxon>Bacteria</taxon>
        <taxon>Bacillati</taxon>
        <taxon>Bacillota</taxon>
        <taxon>Bacilli</taxon>
        <taxon>Lactobacillales</taxon>
        <taxon>Streptococcaceae</taxon>
        <taxon>Streptococcus</taxon>
    </lineage>
</organism>
<accession>Q8DQG3</accession>
<protein>
    <recommendedName>
        <fullName evidence="1">Ribosome maturation factor RimM</fullName>
    </recommendedName>
</protein>